<feature type="signal peptide" evidence="1">
    <location>
        <begin position="1"/>
        <end position="26"/>
    </location>
</feature>
<feature type="chain" id="PRO_0000285740" description="Leu/Ile/Val-binding protein homolog 4">
    <location>
        <begin position="27"/>
        <end position="416"/>
    </location>
</feature>
<evidence type="ECO:0000255" key="1"/>
<evidence type="ECO:0000305" key="2"/>
<organism>
    <name type="scientific">Brucella suis biovar 1 (strain 1330)</name>
    <dbReference type="NCBI Taxonomy" id="204722"/>
    <lineage>
        <taxon>Bacteria</taxon>
        <taxon>Pseudomonadati</taxon>
        <taxon>Pseudomonadota</taxon>
        <taxon>Alphaproteobacteria</taxon>
        <taxon>Hyphomicrobiales</taxon>
        <taxon>Brucellaceae</taxon>
        <taxon>Brucella/Ochrobactrum group</taxon>
        <taxon>Brucella</taxon>
    </lineage>
</organism>
<keyword id="KW-0029">Amino-acid transport</keyword>
<keyword id="KW-0732">Signal</keyword>
<keyword id="KW-0813">Transport</keyword>
<reference key="1">
    <citation type="journal article" date="2002" name="Proc. Natl. Acad. Sci. U.S.A.">
        <title>The Brucella suis genome reveals fundamental similarities between animal and plant pathogens and symbionts.</title>
        <authorList>
            <person name="Paulsen I.T."/>
            <person name="Seshadri R."/>
            <person name="Nelson K.E."/>
            <person name="Eisen J.A."/>
            <person name="Heidelberg J.F."/>
            <person name="Read T.D."/>
            <person name="Dodson R.J."/>
            <person name="Umayam L.A."/>
            <person name="Brinkac L.M."/>
            <person name="Beanan M.J."/>
            <person name="Daugherty S.C."/>
            <person name="DeBoy R.T."/>
            <person name="Durkin A.S."/>
            <person name="Kolonay J.F."/>
            <person name="Madupu R."/>
            <person name="Nelson W.C."/>
            <person name="Ayodeji B."/>
            <person name="Kraul M."/>
            <person name="Shetty J."/>
            <person name="Malek J.A."/>
            <person name="Van Aken S.E."/>
            <person name="Riedmuller S."/>
            <person name="Tettelin H."/>
            <person name="Gill S.R."/>
            <person name="White O."/>
            <person name="Salzberg S.L."/>
            <person name="Hoover D.L."/>
            <person name="Lindler L.E."/>
            <person name="Halling S.M."/>
            <person name="Boyle S.M."/>
            <person name="Fraser C.M."/>
        </authorList>
    </citation>
    <scope>NUCLEOTIDE SEQUENCE [LARGE SCALE GENOMIC DNA]</scope>
    <source>
        <strain>1330</strain>
    </source>
</reference>
<reference key="2">
    <citation type="journal article" date="2011" name="J. Bacteriol.">
        <title>Revised genome sequence of Brucella suis 1330.</title>
        <authorList>
            <person name="Tae H."/>
            <person name="Shallom S."/>
            <person name="Settlage R."/>
            <person name="Preston D."/>
            <person name="Adams L.G."/>
            <person name="Garner H.R."/>
        </authorList>
    </citation>
    <scope>NUCLEOTIDE SEQUENCE [LARGE SCALE GENOMIC DNA]</scope>
    <source>
        <strain>1330</strain>
    </source>
</reference>
<protein>
    <recommendedName>
        <fullName>Leu/Ile/Val-binding protein homolog 4</fullName>
    </recommendedName>
</protein>
<gene>
    <name type="ordered locus">BRA0024</name>
    <name type="ordered locus">BS1330_II0024</name>
</gene>
<proteinExistence type="inferred from homology"/>
<comment type="function">
    <text evidence="2">Component of an amino-acid transport system.</text>
</comment>
<comment type="similarity">
    <text evidence="2">Belongs to the leucine-binding protein family.</text>
</comment>
<comment type="sequence caution" evidence="2">
    <conflict type="erroneous initiation">
        <sequence resource="EMBL-CDS" id="AAN33236"/>
    </conflict>
</comment>
<comment type="sequence caution" evidence="2">
    <conflict type="erroneous initiation">
        <sequence resource="EMBL-CDS" id="AEM19516"/>
    </conflict>
    <text>Extended N-terminus.</text>
</comment>
<sequence length="416" mass="44322">MSLKVFLQAGVACAALSLAGAAGASAEPLKIALVETLSGPQASTGLLYRAAVLYQLGKINEAGGFNGEKIQILEYDNQGGPVGAADRVKAAIADGAQIIVQGSSSAVAGQITEDVRKYNLRNKGKEVLYLNLGAEALELTGSKCHFYHFRFSPNAAIRFKTVAQGMKDKGILGERAYSINQNYSWGVDVENTVVANAKEIGYEVVDKTLHEVNKIQDFSPYVAKIQAANVDTVFTGNWSNDLLLLMKAASGAGLKAKFATSFLDQPGNIGNAGAIAEGHIVSTPFNPEANGEASMAFAEDYKKVTGHYPSYVEPAAVFGLQLFGEALKNVKPGEGKINTTDIALAIENASVKTPMGDYSMRSDDHQAKFPMVVQEVSKKARIKADGTEYGFLPFKTFTGDESIDPVQESCSMKRPG</sequence>
<accession>Q8FXP1</accession>
<accession>G0KEM2</accession>
<name>LIVB4_BRUSU</name>
<dbReference type="EMBL" id="AE014292">
    <property type="protein sequence ID" value="AAN33236.1"/>
    <property type="status" value="ALT_INIT"/>
    <property type="molecule type" value="Genomic_DNA"/>
</dbReference>
<dbReference type="EMBL" id="CP002998">
    <property type="protein sequence ID" value="AEM19516.1"/>
    <property type="status" value="ALT_INIT"/>
    <property type="molecule type" value="Genomic_DNA"/>
</dbReference>
<dbReference type="RefSeq" id="WP_002966556.1">
    <property type="nucleotide sequence ID" value="NZ_KN046805.1"/>
</dbReference>
<dbReference type="SMR" id="Q8FXP1"/>
<dbReference type="KEGG" id="bms:BRA0024"/>
<dbReference type="KEGG" id="bsi:BS1330_II0024"/>
<dbReference type="PATRIC" id="fig|204722.21.peg.320"/>
<dbReference type="HOGENOM" id="CLU_027128_3_0_5"/>
<dbReference type="PhylomeDB" id="Q8FXP1"/>
<dbReference type="Proteomes" id="UP000007104">
    <property type="component" value="Chromosome II"/>
</dbReference>
<dbReference type="GO" id="GO:0006865">
    <property type="term" value="P:amino acid transport"/>
    <property type="evidence" value="ECO:0007669"/>
    <property type="project" value="UniProtKB-KW"/>
</dbReference>
<dbReference type="CDD" id="cd06329">
    <property type="entry name" value="PBP1_SBP-like"/>
    <property type="match status" value="1"/>
</dbReference>
<dbReference type="Gene3D" id="3.40.50.2300">
    <property type="match status" value="2"/>
</dbReference>
<dbReference type="InterPro" id="IPR051010">
    <property type="entry name" value="BCAA_transport"/>
</dbReference>
<dbReference type="InterPro" id="IPR028081">
    <property type="entry name" value="Leu-bd"/>
</dbReference>
<dbReference type="InterPro" id="IPR000709">
    <property type="entry name" value="Leu_Ile_Val-bd"/>
</dbReference>
<dbReference type="InterPro" id="IPR028082">
    <property type="entry name" value="Peripla_BP_I"/>
</dbReference>
<dbReference type="PANTHER" id="PTHR30483">
    <property type="entry name" value="LEUCINE-SPECIFIC-BINDING PROTEIN"/>
    <property type="match status" value="1"/>
</dbReference>
<dbReference type="PANTHER" id="PTHR30483:SF6">
    <property type="entry name" value="PERIPLASMIC BINDING PROTEIN OF ABC TRANSPORTER FOR NATURAL AMINO ACIDS"/>
    <property type="match status" value="1"/>
</dbReference>
<dbReference type="Pfam" id="PF13458">
    <property type="entry name" value="Peripla_BP_6"/>
    <property type="match status" value="1"/>
</dbReference>
<dbReference type="PRINTS" id="PR00337">
    <property type="entry name" value="LEUILEVALBP"/>
</dbReference>
<dbReference type="SUPFAM" id="SSF53822">
    <property type="entry name" value="Periplasmic binding protein-like I"/>
    <property type="match status" value="1"/>
</dbReference>